<geneLocation type="chloroplast"/>
<accession>Q75VA5</accession>
<name>MATK_QUESU</name>
<dbReference type="EMBL" id="AB125044">
    <property type="protein sequence ID" value="BAD14107.1"/>
    <property type="molecule type" value="Genomic_DNA"/>
</dbReference>
<dbReference type="GO" id="GO:0009507">
    <property type="term" value="C:chloroplast"/>
    <property type="evidence" value="ECO:0007669"/>
    <property type="project" value="UniProtKB-SubCell"/>
</dbReference>
<dbReference type="GO" id="GO:0003723">
    <property type="term" value="F:RNA binding"/>
    <property type="evidence" value="ECO:0007669"/>
    <property type="project" value="UniProtKB-KW"/>
</dbReference>
<dbReference type="GO" id="GO:0006397">
    <property type="term" value="P:mRNA processing"/>
    <property type="evidence" value="ECO:0007669"/>
    <property type="project" value="UniProtKB-KW"/>
</dbReference>
<dbReference type="GO" id="GO:0008380">
    <property type="term" value="P:RNA splicing"/>
    <property type="evidence" value="ECO:0007669"/>
    <property type="project" value="UniProtKB-UniRule"/>
</dbReference>
<dbReference type="GO" id="GO:0008033">
    <property type="term" value="P:tRNA processing"/>
    <property type="evidence" value="ECO:0007669"/>
    <property type="project" value="UniProtKB-KW"/>
</dbReference>
<dbReference type="HAMAP" id="MF_01390">
    <property type="entry name" value="MatK"/>
    <property type="match status" value="1"/>
</dbReference>
<dbReference type="InterPro" id="IPR024937">
    <property type="entry name" value="Domain_X"/>
</dbReference>
<dbReference type="InterPro" id="IPR002866">
    <property type="entry name" value="Maturase_MatK"/>
</dbReference>
<dbReference type="InterPro" id="IPR024942">
    <property type="entry name" value="Maturase_MatK_N"/>
</dbReference>
<dbReference type="PANTHER" id="PTHR34811">
    <property type="entry name" value="MATURASE K"/>
    <property type="match status" value="1"/>
</dbReference>
<dbReference type="PANTHER" id="PTHR34811:SF1">
    <property type="entry name" value="MATURASE K"/>
    <property type="match status" value="1"/>
</dbReference>
<dbReference type="Pfam" id="PF01348">
    <property type="entry name" value="Intron_maturas2"/>
    <property type="match status" value="1"/>
</dbReference>
<dbReference type="Pfam" id="PF01824">
    <property type="entry name" value="MatK_N"/>
    <property type="match status" value="1"/>
</dbReference>
<evidence type="ECO:0000255" key="1">
    <source>
        <dbReference type="HAMAP-Rule" id="MF_01390"/>
    </source>
</evidence>
<protein>
    <recommendedName>
        <fullName evidence="1">Maturase K</fullName>
    </recommendedName>
    <alternativeName>
        <fullName evidence="1">Intron maturase</fullName>
    </alternativeName>
</protein>
<feature type="chain" id="PRO_0000143668" description="Maturase K">
    <location>
        <begin position="1"/>
        <end position="504"/>
    </location>
</feature>
<keyword id="KW-0150">Chloroplast</keyword>
<keyword id="KW-0507">mRNA processing</keyword>
<keyword id="KW-0934">Plastid</keyword>
<keyword id="KW-0694">RNA-binding</keyword>
<keyword id="KW-0819">tRNA processing</keyword>
<proteinExistence type="inferred from homology"/>
<organism>
    <name type="scientific">Quercus suber</name>
    <name type="common">Cork oak</name>
    <dbReference type="NCBI Taxonomy" id="58331"/>
    <lineage>
        <taxon>Eukaryota</taxon>
        <taxon>Viridiplantae</taxon>
        <taxon>Streptophyta</taxon>
        <taxon>Embryophyta</taxon>
        <taxon>Tracheophyta</taxon>
        <taxon>Spermatophyta</taxon>
        <taxon>Magnoliopsida</taxon>
        <taxon>eudicotyledons</taxon>
        <taxon>Gunneridae</taxon>
        <taxon>Pentapetalae</taxon>
        <taxon>rosids</taxon>
        <taxon>fabids</taxon>
        <taxon>Fagales</taxon>
        <taxon>Fagaceae</taxon>
        <taxon>Quercus</taxon>
    </lineage>
</organism>
<comment type="function">
    <text evidence="1">Usually encoded in the trnK tRNA gene intron. Probably assists in splicing its own and other chloroplast group II introns.</text>
</comment>
<comment type="subcellular location">
    <subcellularLocation>
        <location>Plastid</location>
        <location>Chloroplast</location>
    </subcellularLocation>
</comment>
<comment type="similarity">
    <text evidence="1">Belongs to the intron maturase 2 family. MatK subfamily.</text>
</comment>
<sequence>MEEFQGYLELDRFRQHDFLYPFIFREYSYALAHGHGLNRYMLLENIGYDNKSSLLIVKRLITTMYQQNYLIISANDSKKNPFFGYNKNLHSKILSEGFAIIVEIPFYLRLISSLEGAEIVRFYNLRSIHSIFPFLEEKFPHLNYSADILIPYPAHLEILVQTLRYRVKDASYLHLLRFFLHEYSNCNSLIITNKSISIFSKSNPRFFLFLYNSYLCEYESIFLFLRNQSSHLRLTSSGVLFERLCLYRKIEHFAEVFANDFPVIPCFLKDPFMHYVRYQGKSILASKDTPLLMNKWKSYLVNLWQCHFDVWSHAASIRINQLSKHSLDFLSYFSSVRRNPAVVRNQMLENSFLLNNAPNKLDTIVPIIPLIGSLAKAKFCNAVGHPISKLTRADLSDFEIINRFLHICRNLSHYYSGSSKKKNMYRIKYILRLSCVKTLARKHKSTARAFLKRVDSEFFQEFFTEEGGFISLIFPRASFALRRLYSGRVWYLDIIFINGLSNHE</sequence>
<gene>
    <name evidence="1" type="primary">matK</name>
</gene>
<reference key="1">
    <citation type="journal article" date="2003" name="Tropics">
        <title>Phylogeny and genetic variation of Fagaceae in tropical montane forests.</title>
        <authorList>
            <person name="Kamiya K."/>
            <person name="Harada K."/>
            <person name="Ogino K."/>
            <person name="Mahani M.C."/>
            <person name="Latiff A."/>
        </authorList>
    </citation>
    <scope>NUCLEOTIDE SEQUENCE [GENOMIC DNA]</scope>
</reference>